<keyword id="KW-0998">Cell outer membrane</keyword>
<keyword id="KW-0133">Cell shape</keyword>
<keyword id="KW-1015">Disulfide bond</keyword>
<keyword id="KW-0449">Lipoprotein</keyword>
<keyword id="KW-0472">Membrane</keyword>
<keyword id="KW-0564">Palmitate</keyword>
<keyword id="KW-0732">Signal</keyword>
<comment type="function">
    <text evidence="1">In elementary bodies (EBs, the infectious stage, which is able to survive outside the host cell) provides the structural integrity of the outer envelope through disulfide cross-links with the large cysteine-rich periplasmic protein and the major outer membrane porin. It has been described in publications as the Sarkosyl-insoluble COMC (Chlamydia outer membrane complex), and serves as the functional equivalent of peptidoglycan (By similarity).</text>
</comment>
<comment type="subunit">
    <text evidence="1">Part of a disulfide cross-linked outer membrane complex (COMC) composed of the major outer membrane porin (MOMP), the small cysteine-rich protein (OmcA) and the large cysteine-rich periplasmic protein (OmcB).</text>
</comment>
<comment type="subcellular location">
    <subcellularLocation>
        <location evidence="4">Cell outer membrane</location>
        <topology evidence="2">Lipid-anchor</topology>
    </subcellularLocation>
    <text>The protein moiety probably penetrates into the periplasm.</text>
</comment>
<comment type="developmental stage">
    <text>It is present but the disulfide bonds are reduced in reticulate bodies (RBs).</text>
</comment>
<organism>
    <name type="scientific">Chlamydia trachomatis</name>
    <dbReference type="NCBI Taxonomy" id="813"/>
    <lineage>
        <taxon>Bacteria</taxon>
        <taxon>Pseudomonadati</taxon>
        <taxon>Chlamydiota</taxon>
        <taxon>Chlamydiia</taxon>
        <taxon>Chlamydiales</taxon>
        <taxon>Chlamydiaceae</taxon>
        <taxon>Chlamydia/Chlamydophila group</taxon>
        <taxon>Chlamydia</taxon>
    </lineage>
</organism>
<proteinExistence type="evidence at transcript level"/>
<reference key="1">
    <citation type="journal article" date="1990" name="Gene">
        <title>Sulfur-rich proteins of Chlamydia trachomatis: developmentally regulated transcription of polycistronic mRNA from tandem promoters.</title>
        <authorList>
            <person name="Lambden P.R."/>
            <person name="Everson J.S."/>
            <person name="Ward M.E."/>
            <person name="Clarke I.N."/>
        </authorList>
    </citation>
    <scope>NUCLEOTIDE SEQUENCE [GENOMIC DNA]</scope>
    <source>
        <strain>L1/440/LN</strain>
    </source>
</reference>
<dbReference type="EMBL" id="M35148">
    <property type="protein sequence ID" value="AAA23118.1"/>
    <property type="molecule type" value="Genomic_DNA"/>
</dbReference>
<dbReference type="PIR" id="JQ0514">
    <property type="entry name" value="JQ0514"/>
</dbReference>
<dbReference type="RefSeq" id="WP_009873814.1">
    <property type="nucleotide sequence ID" value="NZ_NHBA01000001.1"/>
</dbReference>
<dbReference type="OMA" id="PDGRCKQ"/>
<dbReference type="GO" id="GO:0009279">
    <property type="term" value="C:cell outer membrane"/>
    <property type="evidence" value="ECO:0007669"/>
    <property type="project" value="UniProtKB-SubCell"/>
</dbReference>
<dbReference type="GO" id="GO:0005201">
    <property type="term" value="F:extracellular matrix structural constituent"/>
    <property type="evidence" value="ECO:0007669"/>
    <property type="project" value="InterPro"/>
</dbReference>
<dbReference type="GO" id="GO:0008360">
    <property type="term" value="P:regulation of cell shape"/>
    <property type="evidence" value="ECO:0007669"/>
    <property type="project" value="UniProtKB-KW"/>
</dbReference>
<dbReference type="InterPro" id="IPR003517">
    <property type="entry name" value="Cys-rich_OMP3_Chlamydia"/>
</dbReference>
<dbReference type="Pfam" id="PF03503">
    <property type="entry name" value="Chlam_OMP3"/>
    <property type="match status" value="1"/>
</dbReference>
<dbReference type="PRINTS" id="PR01335">
    <property type="entry name" value="CHLAMIDIAOM3"/>
</dbReference>
<dbReference type="PROSITE" id="PS51257">
    <property type="entry name" value="PROKAR_LIPOPROTEIN"/>
    <property type="match status" value="1"/>
</dbReference>
<feature type="signal peptide" evidence="2">
    <location>
        <begin position="1"/>
        <end position="18"/>
    </location>
</feature>
<feature type="chain" id="PRO_0000018156" description="Small cysteine-rich outer membrane protein OmcA">
    <location>
        <begin position="19"/>
        <end position="88"/>
    </location>
</feature>
<feature type="region of interest" description="Disordered" evidence="3">
    <location>
        <begin position="67"/>
        <end position="88"/>
    </location>
</feature>
<feature type="lipid moiety-binding region" description="N-palmitoyl cysteine" evidence="4">
    <location>
        <position position="19"/>
    </location>
</feature>
<feature type="lipid moiety-binding region" description="S-diacylglycerol cysteine" evidence="4">
    <location>
        <position position="19"/>
    </location>
</feature>
<name>OMCA_CHLTH</name>
<sequence>MKKTALLAALCSVVSLSSCCRIVDCCFEDPCAPIQCSPCESKKKDVDGGCNSCNGYVPACKPCGGDTHQDAEHGPQAREIPVDGKCRQ</sequence>
<gene>
    <name type="primary">omcA</name>
    <name type="synonym">omp3</name>
</gene>
<protein>
    <recommendedName>
        <fullName>Small cysteine-rich outer membrane protein OmcA</fullName>
        <shortName>Small-CRP</shortName>
    </recommendedName>
    <alternativeName>
        <fullName>9 kDa cysteine-rich lipoprotein</fullName>
        <shortName>9kDa-CRP</shortName>
    </alternativeName>
</protein>
<accession>P0DJI1</accession>
<accession>P18585</accession>
<accession>P21356</accession>
<evidence type="ECO:0000250" key="1"/>
<evidence type="ECO:0000255" key="2">
    <source>
        <dbReference type="PROSITE-ProRule" id="PRU00303"/>
    </source>
</evidence>
<evidence type="ECO:0000256" key="3">
    <source>
        <dbReference type="SAM" id="MobiDB-lite"/>
    </source>
</evidence>
<evidence type="ECO:0000305" key="4"/>